<evidence type="ECO:0000255" key="1">
    <source>
        <dbReference type="HAMAP-Rule" id="MF_01710"/>
    </source>
</evidence>
<protein>
    <recommendedName>
        <fullName evidence="1">Energy-coupling factor transporter ATP-binding protein EcfA2</fullName>
        <shortName evidence="1">ECF transporter A component EcfA2</shortName>
        <ecNumber evidence="1">7.-.-.-</ecNumber>
    </recommendedName>
</protein>
<feature type="chain" id="PRO_0000287953" description="Energy-coupling factor transporter ATP-binding protein EcfA2">
    <location>
        <begin position="1"/>
        <end position="291"/>
    </location>
</feature>
<feature type="domain" description="ABC transporter" evidence="1">
    <location>
        <begin position="3"/>
        <end position="246"/>
    </location>
</feature>
<feature type="binding site" evidence="1">
    <location>
        <begin position="40"/>
        <end position="47"/>
    </location>
    <ligand>
        <name>ATP</name>
        <dbReference type="ChEBI" id="CHEBI:30616"/>
    </ligand>
</feature>
<sequence length="291" mass="31686">MDITFKDVSYTYQPGTPFQGIGLKHINLTIESGSYTALIGHTGSGKSTLLQHLNALLKPTEGVVQIGERQITPETNNKNLKVIRQKVGMVFQFPESQLFEATVQKDIAFGPQNFGVPEAEALERAKAMVELVGLPEAVLEQSPFDLSGGQMRRVAIAGVLAMQPEVLILDEPTAGLDPVGRREMMGLFEKLHREQGMTIVMVTHQMDDVANYADHVVVLENGGIAKSGTPREIFADPEWLTSKQLGLPTTTQFAQALIKKGFGFPKVPLTEHELAAMLRDQLPQGAGGANE</sequence>
<organism>
    <name type="scientific">Latilactobacillus sakei subsp. sakei (strain 23K)</name>
    <name type="common">Lactobacillus sakei subsp. sakei</name>
    <dbReference type="NCBI Taxonomy" id="314315"/>
    <lineage>
        <taxon>Bacteria</taxon>
        <taxon>Bacillati</taxon>
        <taxon>Bacillota</taxon>
        <taxon>Bacilli</taxon>
        <taxon>Lactobacillales</taxon>
        <taxon>Lactobacillaceae</taxon>
        <taxon>Latilactobacillus</taxon>
    </lineage>
</organism>
<reference key="1">
    <citation type="journal article" date="2005" name="Nat. Biotechnol.">
        <title>The complete genome sequence of the meat-borne lactic acid bacterium Lactobacillus sakei 23K.</title>
        <authorList>
            <person name="Chaillou S."/>
            <person name="Champomier-Verges M.-C."/>
            <person name="Cornet M."/>
            <person name="Crutz-Le Coq A.-M."/>
            <person name="Dudez A.-M."/>
            <person name="Martin V."/>
            <person name="Beaufils S."/>
            <person name="Darbon-Rongere E."/>
            <person name="Bossy R."/>
            <person name="Loux V."/>
            <person name="Zagorec M."/>
        </authorList>
    </citation>
    <scope>NUCLEOTIDE SEQUENCE [LARGE SCALE GENOMIC DNA]</scope>
    <source>
        <strain>23K</strain>
    </source>
</reference>
<accession>Q38UU0</accession>
<name>ECFA2_LATSS</name>
<gene>
    <name evidence="1" type="primary">ecfA2</name>
    <name type="synonym">cbiO2</name>
    <name type="ordered locus">LCA_1736</name>
</gene>
<keyword id="KW-0067">ATP-binding</keyword>
<keyword id="KW-1003">Cell membrane</keyword>
<keyword id="KW-0472">Membrane</keyword>
<keyword id="KW-0547">Nucleotide-binding</keyword>
<keyword id="KW-1185">Reference proteome</keyword>
<keyword id="KW-1278">Translocase</keyword>
<keyword id="KW-0813">Transport</keyword>
<proteinExistence type="inferred from homology"/>
<dbReference type="EC" id="7.-.-.-" evidence="1"/>
<dbReference type="EMBL" id="CR936503">
    <property type="protein sequence ID" value="CAI56044.1"/>
    <property type="molecule type" value="Genomic_DNA"/>
</dbReference>
<dbReference type="RefSeq" id="WP_011375427.1">
    <property type="nucleotide sequence ID" value="NC_007576.1"/>
</dbReference>
<dbReference type="SMR" id="Q38UU0"/>
<dbReference type="STRING" id="314315.LCA_1736"/>
<dbReference type="KEGG" id="lsa:LCA_1736"/>
<dbReference type="eggNOG" id="COG1122">
    <property type="taxonomic scope" value="Bacteria"/>
</dbReference>
<dbReference type="HOGENOM" id="CLU_000604_1_22_9"/>
<dbReference type="OrthoDB" id="9784332at2"/>
<dbReference type="Proteomes" id="UP000002707">
    <property type="component" value="Chromosome"/>
</dbReference>
<dbReference type="GO" id="GO:0043190">
    <property type="term" value="C:ATP-binding cassette (ABC) transporter complex"/>
    <property type="evidence" value="ECO:0007669"/>
    <property type="project" value="TreeGrafter"/>
</dbReference>
<dbReference type="GO" id="GO:0005524">
    <property type="term" value="F:ATP binding"/>
    <property type="evidence" value="ECO:0007669"/>
    <property type="project" value="UniProtKB-KW"/>
</dbReference>
<dbReference type="GO" id="GO:0016887">
    <property type="term" value="F:ATP hydrolysis activity"/>
    <property type="evidence" value="ECO:0007669"/>
    <property type="project" value="InterPro"/>
</dbReference>
<dbReference type="GO" id="GO:0042626">
    <property type="term" value="F:ATPase-coupled transmembrane transporter activity"/>
    <property type="evidence" value="ECO:0007669"/>
    <property type="project" value="TreeGrafter"/>
</dbReference>
<dbReference type="CDD" id="cd03225">
    <property type="entry name" value="ABC_cobalt_CbiO_domain1"/>
    <property type="match status" value="1"/>
</dbReference>
<dbReference type="FunFam" id="3.40.50.300:FF:000224">
    <property type="entry name" value="Energy-coupling factor transporter ATP-binding protein EcfA"/>
    <property type="match status" value="1"/>
</dbReference>
<dbReference type="Gene3D" id="3.40.50.300">
    <property type="entry name" value="P-loop containing nucleotide triphosphate hydrolases"/>
    <property type="match status" value="1"/>
</dbReference>
<dbReference type="InterPro" id="IPR003593">
    <property type="entry name" value="AAA+_ATPase"/>
</dbReference>
<dbReference type="InterPro" id="IPR003439">
    <property type="entry name" value="ABC_transporter-like_ATP-bd"/>
</dbReference>
<dbReference type="InterPro" id="IPR017871">
    <property type="entry name" value="ABC_transporter-like_CS"/>
</dbReference>
<dbReference type="InterPro" id="IPR015856">
    <property type="entry name" value="ABC_transpr_CbiO/EcfA_su"/>
</dbReference>
<dbReference type="InterPro" id="IPR050095">
    <property type="entry name" value="ECF_ABC_transporter_ATP-bd"/>
</dbReference>
<dbReference type="InterPro" id="IPR030946">
    <property type="entry name" value="EcfA2"/>
</dbReference>
<dbReference type="InterPro" id="IPR027417">
    <property type="entry name" value="P-loop_NTPase"/>
</dbReference>
<dbReference type="NCBIfam" id="TIGR04521">
    <property type="entry name" value="ECF_ATPase_2"/>
    <property type="match status" value="1"/>
</dbReference>
<dbReference type="NCBIfam" id="NF010155">
    <property type="entry name" value="PRK13634.1"/>
    <property type="match status" value="1"/>
</dbReference>
<dbReference type="PANTHER" id="PTHR43553:SF27">
    <property type="entry name" value="ENERGY-COUPLING FACTOR TRANSPORTER ATP-BINDING PROTEIN ECFA2"/>
    <property type="match status" value="1"/>
</dbReference>
<dbReference type="PANTHER" id="PTHR43553">
    <property type="entry name" value="HEAVY METAL TRANSPORTER"/>
    <property type="match status" value="1"/>
</dbReference>
<dbReference type="Pfam" id="PF00005">
    <property type="entry name" value="ABC_tran"/>
    <property type="match status" value="1"/>
</dbReference>
<dbReference type="SMART" id="SM00382">
    <property type="entry name" value="AAA"/>
    <property type="match status" value="1"/>
</dbReference>
<dbReference type="SUPFAM" id="SSF52540">
    <property type="entry name" value="P-loop containing nucleoside triphosphate hydrolases"/>
    <property type="match status" value="1"/>
</dbReference>
<dbReference type="PROSITE" id="PS00211">
    <property type="entry name" value="ABC_TRANSPORTER_1"/>
    <property type="match status" value="1"/>
</dbReference>
<dbReference type="PROSITE" id="PS50893">
    <property type="entry name" value="ABC_TRANSPORTER_2"/>
    <property type="match status" value="1"/>
</dbReference>
<dbReference type="PROSITE" id="PS51246">
    <property type="entry name" value="CBIO"/>
    <property type="match status" value="1"/>
</dbReference>
<comment type="function">
    <text evidence="1">ATP-binding (A) component of a common energy-coupling factor (ECF) ABC-transporter complex. Unlike classic ABC transporters this ECF transporter provides the energy necessary to transport a number of different substrates.</text>
</comment>
<comment type="subunit">
    <text evidence="1">Forms a stable energy-coupling factor (ECF) transporter complex composed of 2 membrane-embedded substrate-binding proteins (S component), 2 ATP-binding proteins (A component) and 2 transmembrane proteins (T component).</text>
</comment>
<comment type="subcellular location">
    <subcellularLocation>
        <location evidence="1">Cell membrane</location>
        <topology evidence="1">Peripheral membrane protein</topology>
    </subcellularLocation>
</comment>
<comment type="similarity">
    <text evidence="1">Belongs to the ABC transporter superfamily. Energy-coupling factor EcfA family.</text>
</comment>